<protein>
    <recommendedName>
        <fullName evidence="1">Peptidyl-tRNA hydrolase</fullName>
        <shortName evidence="1">Pth</shortName>
        <ecNumber evidence="1">3.1.1.29</ecNumber>
    </recommendedName>
</protein>
<reference key="1">
    <citation type="journal article" date="2010" name="J. Bacteriol.">
        <title>Whole genome sequences of two Xylella fastidiosa strains (M12 and M23) causing almond leaf scorch disease in California.</title>
        <authorList>
            <person name="Chen J."/>
            <person name="Xie G."/>
            <person name="Han S."/>
            <person name="Chertkov O."/>
            <person name="Sims D."/>
            <person name="Civerolo E.L."/>
        </authorList>
    </citation>
    <scope>NUCLEOTIDE SEQUENCE [LARGE SCALE GENOMIC DNA]</scope>
    <source>
        <strain>M23</strain>
    </source>
</reference>
<gene>
    <name evidence="1" type="primary">pth</name>
    <name type="ordered locus">XfasM23_2116</name>
</gene>
<feature type="chain" id="PRO_1000093004" description="Peptidyl-tRNA hydrolase">
    <location>
        <begin position="1"/>
        <end position="192"/>
    </location>
</feature>
<feature type="active site" description="Proton acceptor" evidence="1">
    <location>
        <position position="22"/>
    </location>
</feature>
<feature type="binding site" evidence="1">
    <location>
        <position position="17"/>
    </location>
    <ligand>
        <name>tRNA</name>
        <dbReference type="ChEBI" id="CHEBI:17843"/>
    </ligand>
</feature>
<feature type="binding site" evidence="1">
    <location>
        <position position="68"/>
    </location>
    <ligand>
        <name>tRNA</name>
        <dbReference type="ChEBI" id="CHEBI:17843"/>
    </ligand>
</feature>
<feature type="binding site" evidence="1">
    <location>
        <position position="70"/>
    </location>
    <ligand>
        <name>tRNA</name>
        <dbReference type="ChEBI" id="CHEBI:17843"/>
    </ligand>
</feature>
<feature type="binding site" evidence="1">
    <location>
        <position position="116"/>
    </location>
    <ligand>
        <name>tRNA</name>
        <dbReference type="ChEBI" id="CHEBI:17843"/>
    </ligand>
</feature>
<feature type="site" description="Discriminates between blocked and unblocked aminoacyl-tRNA" evidence="1">
    <location>
        <position position="12"/>
    </location>
</feature>
<feature type="site" description="Stabilizes the basic form of H active site to accept a proton" evidence="1">
    <location>
        <position position="95"/>
    </location>
</feature>
<accession>B2IA78</accession>
<name>PTH_XYLF2</name>
<organism>
    <name type="scientific">Xylella fastidiosa (strain M23)</name>
    <dbReference type="NCBI Taxonomy" id="405441"/>
    <lineage>
        <taxon>Bacteria</taxon>
        <taxon>Pseudomonadati</taxon>
        <taxon>Pseudomonadota</taxon>
        <taxon>Gammaproteobacteria</taxon>
        <taxon>Lysobacterales</taxon>
        <taxon>Lysobacteraceae</taxon>
        <taxon>Xylella</taxon>
    </lineage>
</organism>
<comment type="function">
    <text evidence="1">Hydrolyzes ribosome-free peptidyl-tRNAs (with 1 or more amino acids incorporated), which drop off the ribosome during protein synthesis, or as a result of ribosome stalling.</text>
</comment>
<comment type="function">
    <text evidence="1">Catalyzes the release of premature peptidyl moieties from peptidyl-tRNA molecules trapped in stalled 50S ribosomal subunits, and thus maintains levels of free tRNAs and 50S ribosomes.</text>
</comment>
<comment type="catalytic activity">
    <reaction evidence="1">
        <text>an N-acyl-L-alpha-aminoacyl-tRNA + H2O = an N-acyl-L-amino acid + a tRNA + H(+)</text>
        <dbReference type="Rhea" id="RHEA:54448"/>
        <dbReference type="Rhea" id="RHEA-COMP:10123"/>
        <dbReference type="Rhea" id="RHEA-COMP:13883"/>
        <dbReference type="ChEBI" id="CHEBI:15377"/>
        <dbReference type="ChEBI" id="CHEBI:15378"/>
        <dbReference type="ChEBI" id="CHEBI:59874"/>
        <dbReference type="ChEBI" id="CHEBI:78442"/>
        <dbReference type="ChEBI" id="CHEBI:138191"/>
        <dbReference type="EC" id="3.1.1.29"/>
    </reaction>
</comment>
<comment type="subunit">
    <text evidence="1">Monomer.</text>
</comment>
<comment type="subcellular location">
    <subcellularLocation>
        <location evidence="1">Cytoplasm</location>
    </subcellularLocation>
</comment>
<comment type="similarity">
    <text evidence="1">Belongs to the PTH family.</text>
</comment>
<sequence length="192" mass="21120">MLGLRLIVGLGNPGSEYIKTRHNAGFRFVDGLVQREGQCWALESKLFAYVARVFIAGQWVWLLRPVTFMNLSGKSICAGLNFWKIKPEQMLVAHDELDFPPGAVRLKFDGGHGGQNGLRDITKLLGHGRFHRLRVGIGHPGHKDRVVSWVLGCPTCDENIAIDAALERASVVLPLAVAGDFDGAMKKLHTVV</sequence>
<proteinExistence type="inferred from homology"/>
<keyword id="KW-0963">Cytoplasm</keyword>
<keyword id="KW-0378">Hydrolase</keyword>
<keyword id="KW-0694">RNA-binding</keyword>
<keyword id="KW-0820">tRNA-binding</keyword>
<evidence type="ECO:0000255" key="1">
    <source>
        <dbReference type="HAMAP-Rule" id="MF_00083"/>
    </source>
</evidence>
<dbReference type="EC" id="3.1.1.29" evidence="1"/>
<dbReference type="EMBL" id="CP001011">
    <property type="protein sequence ID" value="ACB93514.1"/>
    <property type="molecule type" value="Genomic_DNA"/>
</dbReference>
<dbReference type="RefSeq" id="WP_004087394.1">
    <property type="nucleotide sequence ID" value="NC_010577.1"/>
</dbReference>
<dbReference type="SMR" id="B2IA78"/>
<dbReference type="GeneID" id="93905875"/>
<dbReference type="KEGG" id="xfn:XfasM23_2116"/>
<dbReference type="HOGENOM" id="CLU_062456_3_1_6"/>
<dbReference type="Proteomes" id="UP000001698">
    <property type="component" value="Chromosome"/>
</dbReference>
<dbReference type="GO" id="GO:0005737">
    <property type="term" value="C:cytoplasm"/>
    <property type="evidence" value="ECO:0007669"/>
    <property type="project" value="UniProtKB-SubCell"/>
</dbReference>
<dbReference type="GO" id="GO:0004045">
    <property type="term" value="F:peptidyl-tRNA hydrolase activity"/>
    <property type="evidence" value="ECO:0007669"/>
    <property type="project" value="UniProtKB-UniRule"/>
</dbReference>
<dbReference type="GO" id="GO:0000049">
    <property type="term" value="F:tRNA binding"/>
    <property type="evidence" value="ECO:0007669"/>
    <property type="project" value="UniProtKB-UniRule"/>
</dbReference>
<dbReference type="GO" id="GO:0006515">
    <property type="term" value="P:protein quality control for misfolded or incompletely synthesized proteins"/>
    <property type="evidence" value="ECO:0007669"/>
    <property type="project" value="UniProtKB-UniRule"/>
</dbReference>
<dbReference type="GO" id="GO:0072344">
    <property type="term" value="P:rescue of stalled ribosome"/>
    <property type="evidence" value="ECO:0007669"/>
    <property type="project" value="UniProtKB-UniRule"/>
</dbReference>
<dbReference type="CDD" id="cd00462">
    <property type="entry name" value="PTH"/>
    <property type="match status" value="1"/>
</dbReference>
<dbReference type="FunFam" id="3.40.50.1470:FF:000001">
    <property type="entry name" value="Peptidyl-tRNA hydrolase"/>
    <property type="match status" value="1"/>
</dbReference>
<dbReference type="Gene3D" id="3.40.50.1470">
    <property type="entry name" value="Peptidyl-tRNA hydrolase"/>
    <property type="match status" value="1"/>
</dbReference>
<dbReference type="HAMAP" id="MF_00083">
    <property type="entry name" value="Pept_tRNA_hydro_bact"/>
    <property type="match status" value="1"/>
</dbReference>
<dbReference type="InterPro" id="IPR001328">
    <property type="entry name" value="Pept_tRNA_hydro"/>
</dbReference>
<dbReference type="InterPro" id="IPR018171">
    <property type="entry name" value="Pept_tRNA_hydro_CS"/>
</dbReference>
<dbReference type="InterPro" id="IPR036416">
    <property type="entry name" value="Pept_tRNA_hydro_sf"/>
</dbReference>
<dbReference type="NCBIfam" id="TIGR00447">
    <property type="entry name" value="pth"/>
    <property type="match status" value="1"/>
</dbReference>
<dbReference type="PANTHER" id="PTHR17224">
    <property type="entry name" value="PEPTIDYL-TRNA HYDROLASE"/>
    <property type="match status" value="1"/>
</dbReference>
<dbReference type="PANTHER" id="PTHR17224:SF1">
    <property type="entry name" value="PEPTIDYL-TRNA HYDROLASE"/>
    <property type="match status" value="1"/>
</dbReference>
<dbReference type="Pfam" id="PF01195">
    <property type="entry name" value="Pept_tRNA_hydro"/>
    <property type="match status" value="1"/>
</dbReference>
<dbReference type="SUPFAM" id="SSF53178">
    <property type="entry name" value="Peptidyl-tRNA hydrolase-like"/>
    <property type="match status" value="1"/>
</dbReference>
<dbReference type="PROSITE" id="PS01195">
    <property type="entry name" value="PEPT_TRNA_HYDROL_1"/>
    <property type="match status" value="1"/>
</dbReference>